<proteinExistence type="inferred from homology"/>
<sequence length="715" mass="79074">MANASLNGDQSKQQQQQQQQQQQQQNYYNPNAAQSFVPQGGYQQFQQFQPQQQQQQYGGYNQYNQYQGGYQQNYNNRGGYQQGYNNRGGYQQNYNNRGGYQGYNQNQQYGGYQQYNSQPQQQQQQQSQGMSLADFQKQKTEQQASLNKPAVKKTLKLAGSSGIKLANATKKVDTTSKPQSKESSPAPAPAASASASAPQEEKKEEKEAAAATPAAAPETKKETSAPAETKKEATPTPAAKNESTPIPAAAAKKESTPVSNSASVATADALVKEQEDEIDEEVVKDMFGGKDHVSIIFMGHVDAGKSTMGGNILYLTGSVDKRTVEKYEREAKDAGRQGWYLSWVMDTNKEERNDGKTIEVGKAYFETDKRRYTILDAPGHKMYVSEMIGGASQADVGILVISARKGEYETGFEKGGQTREHALLAKTQGVNKIIVVVNKMDDSTVGWSKERYQECTTKLGAFLKGIGYAKDDIIYMPVSGYTGAGLKDRVDPKDCPWYDGPSLLEYLDNMDTMNRKINGPFMMPVSGKMKDLGTIVEGKIESGHVKKGTNLIMMPNKTPIEVLTIFNETEQECDTAFSGEQVRLKIKGIEEEDLQPGYVLTSPKNPVKTVTRFEAQIAIVELKSILSNGFSCVMHLHTAIEEVKFIELKHKLEKGTNRKSKKPPAFAKKGMKIIAILEVGELVCAETYKDYPQLGRFTLRDQGTTIAIGKITKLL</sequence>
<feature type="chain" id="PRO_0000091483" description="Eukaryotic peptide chain release factor GTP-binding subunit">
    <location>
        <begin position="1"/>
        <end position="715"/>
    </location>
</feature>
<feature type="domain" description="tr-type G" evidence="2">
    <location>
        <begin position="290"/>
        <end position="515"/>
    </location>
</feature>
<feature type="region of interest" description="Disordered" evidence="3">
    <location>
        <begin position="1"/>
        <end position="148"/>
    </location>
</feature>
<feature type="region of interest" description="Several sort of repeats">
    <location>
        <begin position="5"/>
        <end position="128"/>
    </location>
</feature>
<feature type="region of interest" description="Charged">
    <location>
        <begin position="129"/>
        <end position="285"/>
    </location>
</feature>
<feature type="region of interest" description="Disordered" evidence="3">
    <location>
        <begin position="168"/>
        <end position="262"/>
    </location>
</feature>
<feature type="region of interest" description="G1" evidence="2">
    <location>
        <begin position="299"/>
        <end position="306"/>
    </location>
</feature>
<feature type="region of interest" description="G2" evidence="2">
    <location>
        <begin position="355"/>
        <end position="359"/>
    </location>
</feature>
<feature type="region of interest" description="G3" evidence="2">
    <location>
        <begin position="376"/>
        <end position="379"/>
    </location>
</feature>
<feature type="region of interest" description="G4" evidence="2">
    <location>
        <begin position="438"/>
        <end position="441"/>
    </location>
</feature>
<feature type="region of interest" description="G5" evidence="2">
    <location>
        <begin position="479"/>
        <end position="481"/>
    </location>
</feature>
<feature type="compositionally biased region" description="Polar residues" evidence="3">
    <location>
        <begin position="1"/>
        <end position="12"/>
    </location>
</feature>
<feature type="compositionally biased region" description="Low complexity" evidence="3">
    <location>
        <begin position="13"/>
        <end position="25"/>
    </location>
</feature>
<feature type="compositionally biased region" description="Polar residues" evidence="3">
    <location>
        <begin position="26"/>
        <end position="37"/>
    </location>
</feature>
<feature type="compositionally biased region" description="Low complexity" evidence="3">
    <location>
        <begin position="39"/>
        <end position="129"/>
    </location>
</feature>
<feature type="compositionally biased region" description="Low complexity" evidence="3">
    <location>
        <begin position="176"/>
        <end position="198"/>
    </location>
</feature>
<feature type="compositionally biased region" description="Basic and acidic residues" evidence="3">
    <location>
        <begin position="199"/>
        <end position="208"/>
    </location>
</feature>
<feature type="compositionally biased region" description="Basic and acidic residues" evidence="3">
    <location>
        <begin position="218"/>
        <end position="233"/>
    </location>
</feature>
<feature type="binding site" evidence="1">
    <location>
        <begin position="299"/>
        <end position="306"/>
    </location>
    <ligand>
        <name>GTP</name>
        <dbReference type="ChEBI" id="CHEBI:37565"/>
    </ligand>
</feature>
<feature type="binding site" evidence="1">
    <location>
        <begin position="376"/>
        <end position="380"/>
    </location>
    <ligand>
        <name>GTP</name>
        <dbReference type="ChEBI" id="CHEBI:37565"/>
    </ligand>
</feature>
<feature type="binding site" evidence="1">
    <location>
        <begin position="438"/>
        <end position="441"/>
    </location>
    <ligand>
        <name>GTP</name>
        <dbReference type="ChEBI" id="CHEBI:37565"/>
    </ligand>
</feature>
<feature type="modified residue" description="Phosphothreonine" evidence="1">
    <location>
        <position position="373"/>
    </location>
</feature>
<evidence type="ECO:0000250" key="1"/>
<evidence type="ECO:0000255" key="2">
    <source>
        <dbReference type="PROSITE-ProRule" id="PRU01059"/>
    </source>
</evidence>
<evidence type="ECO:0000256" key="3">
    <source>
        <dbReference type="SAM" id="MobiDB-lite"/>
    </source>
</evidence>
<evidence type="ECO:0000305" key="4"/>
<organism>
    <name type="scientific">Candida albicans</name>
    <name type="common">Yeast</name>
    <dbReference type="NCBI Taxonomy" id="5476"/>
    <lineage>
        <taxon>Eukaryota</taxon>
        <taxon>Fungi</taxon>
        <taxon>Dikarya</taxon>
        <taxon>Ascomycota</taxon>
        <taxon>Saccharomycotina</taxon>
        <taxon>Pichiomycetes</taxon>
        <taxon>Debaryomycetaceae</taxon>
        <taxon>Candida/Lodderomyces clade</taxon>
        <taxon>Candida</taxon>
    </lineage>
</organism>
<gene>
    <name type="primary">SUP35</name>
</gene>
<dbReference type="EMBL" id="AF020554">
    <property type="protein sequence ID" value="AAB82541.1"/>
    <property type="molecule type" value="Genomic_DNA"/>
</dbReference>
<dbReference type="SMR" id="O13354"/>
<dbReference type="VEuPathDB" id="FungiDB:C2_09720W_A"/>
<dbReference type="VEuPathDB" id="FungiDB:CAWG_06045"/>
<dbReference type="GO" id="GO:0005829">
    <property type="term" value="C:cytosol"/>
    <property type="evidence" value="ECO:0007669"/>
    <property type="project" value="GOC"/>
</dbReference>
<dbReference type="GO" id="GO:0018444">
    <property type="term" value="C:translation release factor complex"/>
    <property type="evidence" value="ECO:0007669"/>
    <property type="project" value="EnsemblFungi"/>
</dbReference>
<dbReference type="GO" id="GO:0005525">
    <property type="term" value="F:GTP binding"/>
    <property type="evidence" value="ECO:0007669"/>
    <property type="project" value="UniProtKB-KW"/>
</dbReference>
<dbReference type="GO" id="GO:0003924">
    <property type="term" value="F:GTPase activity"/>
    <property type="evidence" value="ECO:0007669"/>
    <property type="project" value="EnsemblFungi"/>
</dbReference>
<dbReference type="GO" id="GO:0003747">
    <property type="term" value="F:translation release factor activity"/>
    <property type="evidence" value="ECO:0007669"/>
    <property type="project" value="EnsemblFungi"/>
</dbReference>
<dbReference type="GO" id="GO:0002184">
    <property type="term" value="P:cytoplasmic translational termination"/>
    <property type="evidence" value="ECO:0007669"/>
    <property type="project" value="EnsemblFungi"/>
</dbReference>
<dbReference type="GO" id="GO:0000288">
    <property type="term" value="P:nuclear-transcribed mRNA catabolic process, deadenylation-dependent decay"/>
    <property type="evidence" value="ECO:0007669"/>
    <property type="project" value="InterPro"/>
</dbReference>
<dbReference type="CDD" id="cd01883">
    <property type="entry name" value="EF1_alpha"/>
    <property type="match status" value="1"/>
</dbReference>
<dbReference type="CDD" id="cd03704">
    <property type="entry name" value="eRF3_C_III"/>
    <property type="match status" value="1"/>
</dbReference>
<dbReference type="CDD" id="cd04089">
    <property type="entry name" value="eRF3_II"/>
    <property type="match status" value="1"/>
</dbReference>
<dbReference type="FunFam" id="2.40.30.10:FF:000017">
    <property type="entry name" value="Eukaryotic peptide chain release factor GTP-binding subunit"/>
    <property type="match status" value="1"/>
</dbReference>
<dbReference type="FunFam" id="3.40.50.300:FF:000503">
    <property type="entry name" value="Peptide chain release factor subunit 3"/>
    <property type="match status" value="1"/>
</dbReference>
<dbReference type="FunFam" id="2.40.30.10:FF:000061">
    <property type="entry name" value="Translation release factor eRF3, putative"/>
    <property type="match status" value="1"/>
</dbReference>
<dbReference type="Gene3D" id="3.40.50.300">
    <property type="entry name" value="P-loop containing nucleotide triphosphate hydrolases"/>
    <property type="match status" value="1"/>
</dbReference>
<dbReference type="Gene3D" id="2.40.30.10">
    <property type="entry name" value="Translation factors"/>
    <property type="match status" value="2"/>
</dbReference>
<dbReference type="InterPro" id="IPR004161">
    <property type="entry name" value="EFTu-like_2"/>
</dbReference>
<dbReference type="InterPro" id="IPR031157">
    <property type="entry name" value="G_TR_CS"/>
</dbReference>
<dbReference type="InterPro" id="IPR054696">
    <property type="entry name" value="GTP-eEF1A_C"/>
</dbReference>
<dbReference type="InterPro" id="IPR027417">
    <property type="entry name" value="P-loop_NTPase"/>
</dbReference>
<dbReference type="InterPro" id="IPR003285">
    <property type="entry name" value="Sup35"/>
</dbReference>
<dbReference type="InterPro" id="IPR000795">
    <property type="entry name" value="T_Tr_GTP-bd_dom"/>
</dbReference>
<dbReference type="InterPro" id="IPR050100">
    <property type="entry name" value="TRAFAC_GTPase_members"/>
</dbReference>
<dbReference type="InterPro" id="IPR009000">
    <property type="entry name" value="Transl_B-barrel_sf"/>
</dbReference>
<dbReference type="InterPro" id="IPR009001">
    <property type="entry name" value="Transl_elong_EF1A/Init_IF2_C"/>
</dbReference>
<dbReference type="PANTHER" id="PTHR23115">
    <property type="entry name" value="TRANSLATION FACTOR"/>
    <property type="match status" value="1"/>
</dbReference>
<dbReference type="Pfam" id="PF22594">
    <property type="entry name" value="GTP-eEF1A_C"/>
    <property type="match status" value="1"/>
</dbReference>
<dbReference type="Pfam" id="PF00009">
    <property type="entry name" value="GTP_EFTU"/>
    <property type="match status" value="1"/>
</dbReference>
<dbReference type="Pfam" id="PF03144">
    <property type="entry name" value="GTP_EFTU_D2"/>
    <property type="match status" value="1"/>
</dbReference>
<dbReference type="PRINTS" id="PR00315">
    <property type="entry name" value="ELONGATNFCT"/>
</dbReference>
<dbReference type="PRINTS" id="PR01343">
    <property type="entry name" value="YEASTERF"/>
</dbReference>
<dbReference type="SUPFAM" id="SSF50465">
    <property type="entry name" value="EF-Tu/eEF-1alpha/eIF2-gamma C-terminal domain"/>
    <property type="match status" value="1"/>
</dbReference>
<dbReference type="SUPFAM" id="SSF52540">
    <property type="entry name" value="P-loop containing nucleoside triphosphate hydrolases"/>
    <property type="match status" value="1"/>
</dbReference>
<dbReference type="SUPFAM" id="SSF50447">
    <property type="entry name" value="Translation proteins"/>
    <property type="match status" value="1"/>
</dbReference>
<dbReference type="PROSITE" id="PS00301">
    <property type="entry name" value="G_TR_1"/>
    <property type="match status" value="1"/>
</dbReference>
<dbReference type="PROSITE" id="PS51722">
    <property type="entry name" value="G_TR_2"/>
    <property type="match status" value="1"/>
</dbReference>
<protein>
    <recommendedName>
        <fullName>Eukaryotic peptide chain release factor GTP-binding subunit</fullName>
    </recommendedName>
    <alternativeName>
        <fullName>ERF-3</fullName>
        <shortName>ERF3</shortName>
    </alternativeName>
    <alternativeName>
        <fullName>ERF2</fullName>
    </alternativeName>
    <alternativeName>
        <fullName>Polypeptide release factor 3</fullName>
    </alternativeName>
    <alternativeName>
        <fullName>Translation release factor 3</fullName>
    </alternativeName>
</protein>
<comment type="function">
    <text>Involved in translation termination. Stimulates the activity of ERF1. Binds guanine nucleotides.</text>
</comment>
<comment type="subcellular location">
    <subcellularLocation>
        <location evidence="4">Cytoplasm</location>
    </subcellularLocation>
</comment>
<comment type="similarity">
    <text evidence="2">Belongs to the TRAFAC class translation factor GTPase superfamily. Classic translation factor GTPase family. ERF3 subfamily.</text>
</comment>
<name>ERF3_CANAX</name>
<accession>O13354</accession>
<reference key="1">
    <citation type="journal article" date="2002" name="Microbiology">
        <title>The Candida albicans Sup35p protein (CaSup35p): function, prion-like behaviour and an associated polyglutamine length polymorphism.</title>
        <authorList>
            <person name="Resende C."/>
            <person name="Parham S.N."/>
            <person name="Tinsley C."/>
            <person name="Ferreira P."/>
            <person name="Duarte J.A."/>
            <person name="Tuite M.F."/>
        </authorList>
    </citation>
    <scope>NUCLEOTIDE SEQUENCE [GENOMIC DNA]</scope>
    <source>
        <strain>2005E</strain>
    </source>
</reference>
<keyword id="KW-0963">Cytoplasm</keyword>
<keyword id="KW-0342">GTP-binding</keyword>
<keyword id="KW-0547">Nucleotide-binding</keyword>
<keyword id="KW-0597">Phosphoprotein</keyword>
<keyword id="KW-0648">Protein biosynthesis</keyword>
<keyword id="KW-0677">Repeat</keyword>